<comment type="function">
    <text>Possible role in chlorophyll and/or carotenoid binding.</text>
</comment>
<comment type="subcellular location">
    <subcellularLocation>
        <location>Plastid</location>
        <location>Chloroplast</location>
    </subcellularLocation>
</comment>
<comment type="similarity">
    <text evidence="1">Belongs to the ELIP/psbS family.</text>
</comment>
<feature type="chain" id="PRO_0000185449" description="Uncharacterized protein Ycf17">
    <location>
        <begin position="1"/>
        <end position="48"/>
    </location>
</feature>
<proteinExistence type="inferred from homology"/>
<sequence length="48" mass="5541">MKKNFWFWGFTDSAETWNGRFAMIGFMAVIFIELVTGKGLLYLSGLMN</sequence>
<keyword id="KW-0148">Chlorophyll</keyword>
<keyword id="KW-0150">Chloroplast</keyword>
<keyword id="KW-0157">Chromophore</keyword>
<keyword id="KW-0934">Plastid</keyword>
<protein>
    <recommendedName>
        <fullName>Uncharacterized protein Ycf17</fullName>
    </recommendedName>
    <alternativeName>
        <fullName>ORF48</fullName>
    </alternativeName>
</protein>
<evidence type="ECO:0000305" key="1"/>
<dbReference type="EMBL" id="U38804">
    <property type="protein sequence ID" value="AAC08241.1"/>
    <property type="molecule type" value="Genomic_DNA"/>
</dbReference>
<dbReference type="PIR" id="S73276">
    <property type="entry name" value="S73276"/>
</dbReference>
<dbReference type="RefSeq" id="NP_053965.1">
    <property type="nucleotide sequence ID" value="NC_000925.1"/>
</dbReference>
<dbReference type="SMR" id="P51355"/>
<dbReference type="GeneID" id="809991"/>
<dbReference type="GO" id="GO:0009507">
    <property type="term" value="C:chloroplast"/>
    <property type="evidence" value="ECO:0007669"/>
    <property type="project" value="UniProtKB-SubCell"/>
</dbReference>
<dbReference type="GO" id="GO:0016168">
    <property type="term" value="F:chlorophyll binding"/>
    <property type="evidence" value="ECO:0007669"/>
    <property type="project" value="UniProtKB-KW"/>
</dbReference>
<dbReference type="Gene3D" id="1.10.3460.10">
    <property type="entry name" value="Chlorophyll a/b binding protein domain"/>
    <property type="match status" value="1"/>
</dbReference>
<dbReference type="SUPFAM" id="SSF103511">
    <property type="entry name" value="Chlorophyll a-b binding protein"/>
    <property type="match status" value="1"/>
</dbReference>
<accession>P51355</accession>
<reference key="1">
    <citation type="journal article" date="1995" name="Plant Mol. Biol. Rep.">
        <title>Complete nucleotide sequence of the Porphyra purpurea chloroplast genome.</title>
        <authorList>
            <person name="Reith M.E."/>
            <person name="Munholland J."/>
        </authorList>
    </citation>
    <scope>NUCLEOTIDE SEQUENCE [LARGE SCALE GENOMIC DNA]</scope>
    <source>
        <strain>Avonport</strain>
    </source>
</reference>
<geneLocation type="chloroplast"/>
<organism>
    <name type="scientific">Porphyra purpurea</name>
    <name type="common">Red seaweed</name>
    <name type="synonym">Ulva purpurea</name>
    <dbReference type="NCBI Taxonomy" id="2787"/>
    <lineage>
        <taxon>Eukaryota</taxon>
        <taxon>Rhodophyta</taxon>
        <taxon>Bangiophyceae</taxon>
        <taxon>Bangiales</taxon>
        <taxon>Bangiaceae</taxon>
        <taxon>Porphyra</taxon>
    </lineage>
</organism>
<gene>
    <name type="primary">ycf17</name>
</gene>
<name>YCF17_PORPU</name>